<gene>
    <name evidence="1" type="primary">ilvD</name>
    <name type="ordered locus">CKR_1573</name>
</gene>
<sequence>MRSDVITKGTKSAPQRALLNALGLTKEEIERPLVGIVSSKNDIVPGHMNLDKIVEAVKTGVSMAGGTPIVFPAIAVCDGIAMGHQGMKYSLVTRDLIADSTEAMAMAHAFDALVMVPNCDKNVPGLLMAAARLNIPTIFVSGGPMLAGKVDGCKVSFSSISEAVGAFNGGKITEEKLEEFESKVCPTCGSCSGMYTANSMNCLTEVLGMALGGNGTIPAVYSDRIKLAKHAGMKIMELLERNIRPRDVMTEAAFKNALTMDMALGCSTNSMLHLPAIAHEAGIELNVDMANEISAKTPNLCHLAPAGHNYVEELNEAGGIYAVMNEINKLNLLSTDLITCTGKTVAENIKGCINKNKEVIRPVENPYSTTGGIAILKGNLAPDSCVVKRSAVAPEMLKHEGPARVFDCEEDALNAINTGKIVAGDVVIIRYEGPKGGPGMREMLNPTSAIMGRGLGGSVALITDGRFSGATRGAAIGHVSPEAAVGGNIALVEEGDIIKIDIEANSIDFEISEEELERRRSNWKPRQPKITTGYLARYASMVTSGNRGAILEIPKF</sequence>
<protein>
    <recommendedName>
        <fullName evidence="1">Dihydroxy-acid dehydratase</fullName>
        <shortName evidence="1">DAD</shortName>
        <ecNumber evidence="1">4.2.1.9</ecNumber>
    </recommendedName>
</protein>
<feature type="chain" id="PRO_1000190660" description="Dihydroxy-acid dehydratase">
    <location>
        <begin position="1"/>
        <end position="556"/>
    </location>
</feature>
<feature type="active site" description="Proton acceptor" evidence="1">
    <location>
        <position position="468"/>
    </location>
</feature>
<feature type="binding site" evidence="1">
    <location>
        <position position="78"/>
    </location>
    <ligand>
        <name>Mg(2+)</name>
        <dbReference type="ChEBI" id="CHEBI:18420"/>
    </ligand>
</feature>
<feature type="binding site" evidence="1">
    <location>
        <position position="119"/>
    </location>
    <ligand>
        <name>[2Fe-2S] cluster</name>
        <dbReference type="ChEBI" id="CHEBI:190135"/>
    </ligand>
</feature>
<feature type="binding site" evidence="1">
    <location>
        <position position="120"/>
    </location>
    <ligand>
        <name>Mg(2+)</name>
        <dbReference type="ChEBI" id="CHEBI:18420"/>
    </ligand>
</feature>
<feature type="binding site" description="via carbamate group" evidence="1">
    <location>
        <position position="121"/>
    </location>
    <ligand>
        <name>Mg(2+)</name>
        <dbReference type="ChEBI" id="CHEBI:18420"/>
    </ligand>
</feature>
<feature type="binding site" evidence="1">
    <location>
        <position position="191"/>
    </location>
    <ligand>
        <name>[2Fe-2S] cluster</name>
        <dbReference type="ChEBI" id="CHEBI:190135"/>
    </ligand>
</feature>
<feature type="binding site" evidence="1">
    <location>
        <position position="442"/>
    </location>
    <ligand>
        <name>Mg(2+)</name>
        <dbReference type="ChEBI" id="CHEBI:18420"/>
    </ligand>
</feature>
<feature type="modified residue" description="N6-carboxylysine" evidence="1">
    <location>
        <position position="121"/>
    </location>
</feature>
<proteinExistence type="inferred from homology"/>
<dbReference type="EC" id="4.2.1.9" evidence="1"/>
<dbReference type="EMBL" id="AP009049">
    <property type="protein sequence ID" value="BAH06624.1"/>
    <property type="molecule type" value="Genomic_DNA"/>
</dbReference>
<dbReference type="RefSeq" id="WP_012102089.1">
    <property type="nucleotide sequence ID" value="NC_011837.1"/>
</dbReference>
<dbReference type="SMR" id="B9E299"/>
<dbReference type="KEGG" id="ckr:CKR_1573"/>
<dbReference type="HOGENOM" id="CLU_014271_4_2_9"/>
<dbReference type="UniPathway" id="UPA00047">
    <property type="reaction ID" value="UER00057"/>
</dbReference>
<dbReference type="UniPathway" id="UPA00049">
    <property type="reaction ID" value="UER00061"/>
</dbReference>
<dbReference type="Proteomes" id="UP000007969">
    <property type="component" value="Chromosome"/>
</dbReference>
<dbReference type="GO" id="GO:0005829">
    <property type="term" value="C:cytosol"/>
    <property type="evidence" value="ECO:0007669"/>
    <property type="project" value="TreeGrafter"/>
</dbReference>
<dbReference type="GO" id="GO:0051537">
    <property type="term" value="F:2 iron, 2 sulfur cluster binding"/>
    <property type="evidence" value="ECO:0007669"/>
    <property type="project" value="UniProtKB-UniRule"/>
</dbReference>
<dbReference type="GO" id="GO:0004160">
    <property type="term" value="F:dihydroxy-acid dehydratase activity"/>
    <property type="evidence" value="ECO:0007669"/>
    <property type="project" value="UniProtKB-UniRule"/>
</dbReference>
<dbReference type="GO" id="GO:0000287">
    <property type="term" value="F:magnesium ion binding"/>
    <property type="evidence" value="ECO:0007669"/>
    <property type="project" value="UniProtKB-UniRule"/>
</dbReference>
<dbReference type="GO" id="GO:0009097">
    <property type="term" value="P:isoleucine biosynthetic process"/>
    <property type="evidence" value="ECO:0007669"/>
    <property type="project" value="UniProtKB-UniRule"/>
</dbReference>
<dbReference type="GO" id="GO:0009099">
    <property type="term" value="P:L-valine biosynthetic process"/>
    <property type="evidence" value="ECO:0007669"/>
    <property type="project" value="UniProtKB-UniRule"/>
</dbReference>
<dbReference type="FunFam" id="3.50.30.80:FF:000001">
    <property type="entry name" value="Dihydroxy-acid dehydratase"/>
    <property type="match status" value="1"/>
</dbReference>
<dbReference type="Gene3D" id="3.50.30.80">
    <property type="entry name" value="IlvD/EDD C-terminal domain-like"/>
    <property type="match status" value="1"/>
</dbReference>
<dbReference type="HAMAP" id="MF_00012">
    <property type="entry name" value="IlvD"/>
    <property type="match status" value="1"/>
</dbReference>
<dbReference type="InterPro" id="IPR042096">
    <property type="entry name" value="Dihydro-acid_dehy_C"/>
</dbReference>
<dbReference type="InterPro" id="IPR004404">
    <property type="entry name" value="DihydroxyA_deHydtase"/>
</dbReference>
<dbReference type="InterPro" id="IPR020558">
    <property type="entry name" value="DiOHA_6PGluconate_deHydtase_CS"/>
</dbReference>
<dbReference type="InterPro" id="IPR056740">
    <property type="entry name" value="ILV_EDD_C"/>
</dbReference>
<dbReference type="InterPro" id="IPR000581">
    <property type="entry name" value="ILV_EDD_N"/>
</dbReference>
<dbReference type="InterPro" id="IPR037237">
    <property type="entry name" value="IlvD/EDD_N"/>
</dbReference>
<dbReference type="NCBIfam" id="TIGR00110">
    <property type="entry name" value="ilvD"/>
    <property type="match status" value="1"/>
</dbReference>
<dbReference type="NCBIfam" id="NF002068">
    <property type="entry name" value="PRK00911.1"/>
    <property type="match status" value="1"/>
</dbReference>
<dbReference type="PANTHER" id="PTHR43661">
    <property type="entry name" value="D-XYLONATE DEHYDRATASE"/>
    <property type="match status" value="1"/>
</dbReference>
<dbReference type="PANTHER" id="PTHR43661:SF3">
    <property type="entry name" value="D-XYLONATE DEHYDRATASE YAGF-RELATED"/>
    <property type="match status" value="1"/>
</dbReference>
<dbReference type="Pfam" id="PF24877">
    <property type="entry name" value="ILV_EDD_C"/>
    <property type="match status" value="1"/>
</dbReference>
<dbReference type="Pfam" id="PF00920">
    <property type="entry name" value="ILVD_EDD_N"/>
    <property type="match status" value="1"/>
</dbReference>
<dbReference type="SUPFAM" id="SSF143975">
    <property type="entry name" value="IlvD/EDD N-terminal domain-like"/>
    <property type="match status" value="1"/>
</dbReference>
<dbReference type="SUPFAM" id="SSF52016">
    <property type="entry name" value="LeuD/IlvD-like"/>
    <property type="match status" value="1"/>
</dbReference>
<dbReference type="PROSITE" id="PS00886">
    <property type="entry name" value="ILVD_EDD_1"/>
    <property type="match status" value="1"/>
</dbReference>
<dbReference type="PROSITE" id="PS00887">
    <property type="entry name" value="ILVD_EDD_2"/>
    <property type="match status" value="1"/>
</dbReference>
<accession>B9E299</accession>
<keyword id="KW-0001">2Fe-2S</keyword>
<keyword id="KW-0028">Amino-acid biosynthesis</keyword>
<keyword id="KW-0100">Branched-chain amino acid biosynthesis</keyword>
<keyword id="KW-0408">Iron</keyword>
<keyword id="KW-0411">Iron-sulfur</keyword>
<keyword id="KW-0456">Lyase</keyword>
<keyword id="KW-0460">Magnesium</keyword>
<keyword id="KW-0479">Metal-binding</keyword>
<comment type="function">
    <text evidence="1">Functions in the biosynthesis of branched-chain amino acids. Catalyzes the dehydration of (2R,3R)-2,3-dihydroxy-3-methylpentanoate (2,3-dihydroxy-3-methylvalerate) into 2-oxo-3-methylpentanoate (2-oxo-3-methylvalerate) and of (2R)-2,3-dihydroxy-3-methylbutanoate (2,3-dihydroxyisovalerate) into 2-oxo-3-methylbutanoate (2-oxoisovalerate), the penultimate precursor to L-isoleucine and L-valine, respectively.</text>
</comment>
<comment type="catalytic activity">
    <reaction evidence="1">
        <text>(2R)-2,3-dihydroxy-3-methylbutanoate = 3-methyl-2-oxobutanoate + H2O</text>
        <dbReference type="Rhea" id="RHEA:24809"/>
        <dbReference type="ChEBI" id="CHEBI:11851"/>
        <dbReference type="ChEBI" id="CHEBI:15377"/>
        <dbReference type="ChEBI" id="CHEBI:49072"/>
        <dbReference type="EC" id="4.2.1.9"/>
    </reaction>
    <physiologicalReaction direction="left-to-right" evidence="1">
        <dbReference type="Rhea" id="RHEA:24810"/>
    </physiologicalReaction>
</comment>
<comment type="catalytic activity">
    <reaction evidence="1">
        <text>(2R,3R)-2,3-dihydroxy-3-methylpentanoate = (S)-3-methyl-2-oxopentanoate + H2O</text>
        <dbReference type="Rhea" id="RHEA:27694"/>
        <dbReference type="ChEBI" id="CHEBI:15377"/>
        <dbReference type="ChEBI" id="CHEBI:35146"/>
        <dbReference type="ChEBI" id="CHEBI:49258"/>
        <dbReference type="EC" id="4.2.1.9"/>
    </reaction>
    <physiologicalReaction direction="left-to-right" evidence="1">
        <dbReference type="Rhea" id="RHEA:27695"/>
    </physiologicalReaction>
</comment>
<comment type="cofactor">
    <cofactor evidence="1">
        <name>[2Fe-2S] cluster</name>
        <dbReference type="ChEBI" id="CHEBI:190135"/>
    </cofactor>
    <text evidence="1">Binds 1 [2Fe-2S] cluster per subunit. This cluster acts as a Lewis acid cofactor.</text>
</comment>
<comment type="cofactor">
    <cofactor evidence="1">
        <name>Mg(2+)</name>
        <dbReference type="ChEBI" id="CHEBI:18420"/>
    </cofactor>
</comment>
<comment type="pathway">
    <text evidence="1">Amino-acid biosynthesis; L-isoleucine biosynthesis; L-isoleucine from 2-oxobutanoate: step 3/4.</text>
</comment>
<comment type="pathway">
    <text evidence="1">Amino-acid biosynthesis; L-valine biosynthesis; L-valine from pyruvate: step 3/4.</text>
</comment>
<comment type="subunit">
    <text evidence="1">Homodimer.</text>
</comment>
<comment type="similarity">
    <text evidence="1">Belongs to the IlvD/Edd family.</text>
</comment>
<reference key="1">
    <citation type="submission" date="2005-09" db="EMBL/GenBank/DDBJ databases">
        <title>Complete genome sequence of Clostridium kluyveri and comparative genomics of Clostridia species.</title>
        <authorList>
            <person name="Inui M."/>
            <person name="Nonaka H."/>
            <person name="Shinoda Y."/>
            <person name="Ikenaga Y."/>
            <person name="Abe M."/>
            <person name="Naito K."/>
            <person name="Vertes A.A."/>
            <person name="Yukawa H."/>
        </authorList>
    </citation>
    <scope>NUCLEOTIDE SEQUENCE [LARGE SCALE GENOMIC DNA]</scope>
    <source>
        <strain>NBRC 12016</strain>
    </source>
</reference>
<name>ILVD_CLOK1</name>
<evidence type="ECO:0000255" key="1">
    <source>
        <dbReference type="HAMAP-Rule" id="MF_00012"/>
    </source>
</evidence>
<organism>
    <name type="scientific">Clostridium kluyveri (strain NBRC 12016)</name>
    <dbReference type="NCBI Taxonomy" id="583346"/>
    <lineage>
        <taxon>Bacteria</taxon>
        <taxon>Bacillati</taxon>
        <taxon>Bacillota</taxon>
        <taxon>Clostridia</taxon>
        <taxon>Eubacteriales</taxon>
        <taxon>Clostridiaceae</taxon>
        <taxon>Clostridium</taxon>
    </lineage>
</organism>